<proteinExistence type="inferred from homology"/>
<reference key="1">
    <citation type="journal article" date="2007" name="Proc. Natl. Acad. Sci. U.S.A.">
        <title>Parallel genomic evolution and metabolic interdependence in an ancient symbiosis.</title>
        <authorList>
            <person name="McCutcheon J.P."/>
            <person name="Moran N.A."/>
        </authorList>
    </citation>
    <scope>NUCLEOTIDE SEQUENCE [LARGE SCALE GENOMIC DNA]</scope>
    <source>
        <strain>GWSS</strain>
    </source>
</reference>
<accession>A8Z609</accession>
<gene>
    <name evidence="1" type="primary">lipA</name>
    <name type="ordered locus">SMGWSS_152</name>
</gene>
<dbReference type="EC" id="2.8.1.8" evidence="1"/>
<dbReference type="EMBL" id="CP000770">
    <property type="protein sequence ID" value="ABS30560.1"/>
    <property type="molecule type" value="Genomic_DNA"/>
</dbReference>
<dbReference type="SMR" id="A8Z609"/>
<dbReference type="STRING" id="444179.SMGWSS_152"/>
<dbReference type="KEGG" id="smg:SMGWSS_152"/>
<dbReference type="HOGENOM" id="CLU_033144_2_1_10"/>
<dbReference type="UniPathway" id="UPA00538">
    <property type="reaction ID" value="UER00593"/>
</dbReference>
<dbReference type="Proteomes" id="UP000000781">
    <property type="component" value="Chromosome"/>
</dbReference>
<dbReference type="GO" id="GO:0005737">
    <property type="term" value="C:cytoplasm"/>
    <property type="evidence" value="ECO:0007669"/>
    <property type="project" value="UniProtKB-SubCell"/>
</dbReference>
<dbReference type="GO" id="GO:0051539">
    <property type="term" value="F:4 iron, 4 sulfur cluster binding"/>
    <property type="evidence" value="ECO:0007669"/>
    <property type="project" value="UniProtKB-UniRule"/>
</dbReference>
<dbReference type="GO" id="GO:0016992">
    <property type="term" value="F:lipoate synthase activity"/>
    <property type="evidence" value="ECO:0007669"/>
    <property type="project" value="UniProtKB-UniRule"/>
</dbReference>
<dbReference type="GO" id="GO:0046872">
    <property type="term" value="F:metal ion binding"/>
    <property type="evidence" value="ECO:0007669"/>
    <property type="project" value="UniProtKB-KW"/>
</dbReference>
<dbReference type="Gene3D" id="3.20.20.70">
    <property type="entry name" value="Aldolase class I"/>
    <property type="match status" value="1"/>
</dbReference>
<dbReference type="HAMAP" id="MF_00206">
    <property type="entry name" value="Lipoyl_synth"/>
    <property type="match status" value="1"/>
</dbReference>
<dbReference type="InterPro" id="IPR013785">
    <property type="entry name" value="Aldolase_TIM"/>
</dbReference>
<dbReference type="InterPro" id="IPR006638">
    <property type="entry name" value="Elp3/MiaA/NifB-like_rSAM"/>
</dbReference>
<dbReference type="InterPro" id="IPR003698">
    <property type="entry name" value="Lipoyl_synth"/>
</dbReference>
<dbReference type="InterPro" id="IPR007197">
    <property type="entry name" value="rSAM"/>
</dbReference>
<dbReference type="NCBIfam" id="TIGR00510">
    <property type="entry name" value="lipA"/>
    <property type="match status" value="1"/>
</dbReference>
<dbReference type="NCBIfam" id="NF004019">
    <property type="entry name" value="PRK05481.1"/>
    <property type="match status" value="1"/>
</dbReference>
<dbReference type="NCBIfam" id="NF009544">
    <property type="entry name" value="PRK12928.1"/>
    <property type="match status" value="1"/>
</dbReference>
<dbReference type="PANTHER" id="PTHR10949">
    <property type="entry name" value="LIPOYL SYNTHASE"/>
    <property type="match status" value="1"/>
</dbReference>
<dbReference type="PANTHER" id="PTHR10949:SF0">
    <property type="entry name" value="LIPOYL SYNTHASE, MITOCHONDRIAL"/>
    <property type="match status" value="1"/>
</dbReference>
<dbReference type="Pfam" id="PF04055">
    <property type="entry name" value="Radical_SAM"/>
    <property type="match status" value="1"/>
</dbReference>
<dbReference type="PIRSF" id="PIRSF005963">
    <property type="entry name" value="Lipoyl_synth"/>
    <property type="match status" value="1"/>
</dbReference>
<dbReference type="SFLD" id="SFLDF00271">
    <property type="entry name" value="lipoyl_synthase"/>
    <property type="match status" value="1"/>
</dbReference>
<dbReference type="SFLD" id="SFLDG01058">
    <property type="entry name" value="lipoyl_synthase_like"/>
    <property type="match status" value="1"/>
</dbReference>
<dbReference type="SMART" id="SM00729">
    <property type="entry name" value="Elp3"/>
    <property type="match status" value="1"/>
</dbReference>
<dbReference type="SUPFAM" id="SSF102114">
    <property type="entry name" value="Radical SAM enzymes"/>
    <property type="match status" value="1"/>
</dbReference>
<dbReference type="PROSITE" id="PS51918">
    <property type="entry name" value="RADICAL_SAM"/>
    <property type="match status" value="1"/>
</dbReference>
<feature type="chain" id="PRO_0000325314" description="Lipoyl synthase">
    <location>
        <begin position="1"/>
        <end position="286"/>
    </location>
</feature>
<feature type="domain" description="Radical SAM core" evidence="2">
    <location>
        <begin position="50"/>
        <end position="265"/>
    </location>
</feature>
<feature type="binding site" evidence="1">
    <location>
        <position position="38"/>
    </location>
    <ligand>
        <name>[4Fe-4S] cluster</name>
        <dbReference type="ChEBI" id="CHEBI:49883"/>
        <label>1</label>
    </ligand>
</feature>
<feature type="binding site" evidence="1">
    <location>
        <position position="43"/>
    </location>
    <ligand>
        <name>[4Fe-4S] cluster</name>
        <dbReference type="ChEBI" id="CHEBI:49883"/>
        <label>1</label>
    </ligand>
</feature>
<feature type="binding site" evidence="1">
    <location>
        <position position="49"/>
    </location>
    <ligand>
        <name>[4Fe-4S] cluster</name>
        <dbReference type="ChEBI" id="CHEBI:49883"/>
        <label>1</label>
    </ligand>
</feature>
<feature type="binding site" evidence="1">
    <location>
        <position position="64"/>
    </location>
    <ligand>
        <name>[4Fe-4S] cluster</name>
        <dbReference type="ChEBI" id="CHEBI:49883"/>
        <label>2</label>
        <note>4Fe-4S-S-AdoMet</note>
    </ligand>
</feature>
<feature type="binding site" evidence="1">
    <location>
        <position position="68"/>
    </location>
    <ligand>
        <name>[4Fe-4S] cluster</name>
        <dbReference type="ChEBI" id="CHEBI:49883"/>
        <label>2</label>
        <note>4Fe-4S-S-AdoMet</note>
    </ligand>
</feature>
<feature type="binding site" evidence="1">
    <location>
        <position position="71"/>
    </location>
    <ligand>
        <name>[4Fe-4S] cluster</name>
        <dbReference type="ChEBI" id="CHEBI:49883"/>
        <label>2</label>
        <note>4Fe-4S-S-AdoMet</note>
    </ligand>
</feature>
<feature type="binding site" evidence="1">
    <location>
        <position position="276"/>
    </location>
    <ligand>
        <name>[4Fe-4S] cluster</name>
        <dbReference type="ChEBI" id="CHEBI:49883"/>
        <label>1</label>
    </ligand>
</feature>
<organism>
    <name type="scientific">Karelsulcia muelleri (strain GWSS)</name>
    <name type="common">Sulcia muelleri</name>
    <dbReference type="NCBI Taxonomy" id="444179"/>
    <lineage>
        <taxon>Bacteria</taxon>
        <taxon>Pseudomonadati</taxon>
        <taxon>Bacteroidota</taxon>
        <taxon>Flavobacteriia</taxon>
        <taxon>Flavobacteriales</taxon>
        <taxon>Candidatus Karelsulcia</taxon>
    </lineage>
</organism>
<comment type="function">
    <text evidence="1">Catalyzes the radical-mediated insertion of two sulfur atoms into the C-6 and C-8 positions of the octanoyl moiety bound to the lipoyl domains of lipoate-dependent enzymes, thereby converting the octanoylated domains into lipoylated derivatives.</text>
</comment>
<comment type="catalytic activity">
    <reaction evidence="1">
        <text>[[Fe-S] cluster scaffold protein carrying a second [4Fe-4S](2+) cluster] + N(6)-octanoyl-L-lysyl-[protein] + 2 oxidized [2Fe-2S]-[ferredoxin] + 2 S-adenosyl-L-methionine + 4 H(+) = [[Fe-S] cluster scaffold protein] + N(6)-[(R)-dihydrolipoyl]-L-lysyl-[protein] + 4 Fe(3+) + 2 hydrogen sulfide + 2 5'-deoxyadenosine + 2 L-methionine + 2 reduced [2Fe-2S]-[ferredoxin]</text>
        <dbReference type="Rhea" id="RHEA:16585"/>
        <dbReference type="Rhea" id="RHEA-COMP:9928"/>
        <dbReference type="Rhea" id="RHEA-COMP:10000"/>
        <dbReference type="Rhea" id="RHEA-COMP:10001"/>
        <dbReference type="Rhea" id="RHEA-COMP:10475"/>
        <dbReference type="Rhea" id="RHEA-COMP:14568"/>
        <dbReference type="Rhea" id="RHEA-COMP:14569"/>
        <dbReference type="ChEBI" id="CHEBI:15378"/>
        <dbReference type="ChEBI" id="CHEBI:17319"/>
        <dbReference type="ChEBI" id="CHEBI:29034"/>
        <dbReference type="ChEBI" id="CHEBI:29919"/>
        <dbReference type="ChEBI" id="CHEBI:33722"/>
        <dbReference type="ChEBI" id="CHEBI:33737"/>
        <dbReference type="ChEBI" id="CHEBI:33738"/>
        <dbReference type="ChEBI" id="CHEBI:57844"/>
        <dbReference type="ChEBI" id="CHEBI:59789"/>
        <dbReference type="ChEBI" id="CHEBI:78809"/>
        <dbReference type="ChEBI" id="CHEBI:83100"/>
        <dbReference type="EC" id="2.8.1.8"/>
    </reaction>
</comment>
<comment type="cofactor">
    <cofactor evidence="1">
        <name>[4Fe-4S] cluster</name>
        <dbReference type="ChEBI" id="CHEBI:49883"/>
    </cofactor>
    <text evidence="1">Binds 2 [4Fe-4S] clusters per subunit. One cluster is coordinated with 3 cysteines and an exchangeable S-adenosyl-L-methionine.</text>
</comment>
<comment type="pathway">
    <text evidence="1">Protein modification; protein lipoylation via endogenous pathway; protein N(6)-(lipoyl)lysine from octanoyl-[acyl-carrier-protein]: step 2/2.</text>
</comment>
<comment type="subcellular location">
    <subcellularLocation>
        <location evidence="1">Cytoplasm</location>
    </subcellularLocation>
</comment>
<comment type="similarity">
    <text evidence="1">Belongs to the radical SAM superfamily. Lipoyl synthase family.</text>
</comment>
<sequence length="286" mass="32985">MKKNKNINFKPKWLRVKSPDKYNNIYKISNYNNLNTICKSGSCPNIAECWEQGVATFMILGNICTRSCKFCGVKTGKPNKIDFYEPKKIAHNIKIMKIKHAVITSVDRDDLKDMGAIIWGKTIKAIKNINEKISLETLIPDFKGRKDLINIIVNEKPEVISHNIETVRRLTKKVRTQAKYDRSINVLKYIKLISNIRTKTGIMLGLGETEEEVIQTLKDSRNANIDIITIGQYLSPSIKHFYVKKFIPPYIFKKYENIALDMGFLYVESGPLVRSSYNAYKHIFLK</sequence>
<keyword id="KW-0004">4Fe-4S</keyword>
<keyword id="KW-0963">Cytoplasm</keyword>
<keyword id="KW-0408">Iron</keyword>
<keyword id="KW-0411">Iron-sulfur</keyword>
<keyword id="KW-0479">Metal-binding</keyword>
<keyword id="KW-0949">S-adenosyl-L-methionine</keyword>
<keyword id="KW-0808">Transferase</keyword>
<name>LIPA_KARMG</name>
<evidence type="ECO:0000255" key="1">
    <source>
        <dbReference type="HAMAP-Rule" id="MF_00206"/>
    </source>
</evidence>
<evidence type="ECO:0000255" key="2">
    <source>
        <dbReference type="PROSITE-ProRule" id="PRU01266"/>
    </source>
</evidence>
<protein>
    <recommendedName>
        <fullName evidence="1">Lipoyl synthase</fullName>
        <ecNumber evidence="1">2.8.1.8</ecNumber>
    </recommendedName>
    <alternativeName>
        <fullName evidence="1">Lip-syn</fullName>
        <shortName evidence="1">LS</shortName>
    </alternativeName>
    <alternativeName>
        <fullName evidence="1">Lipoate synthase</fullName>
    </alternativeName>
    <alternativeName>
        <fullName evidence="1">Lipoic acid synthase</fullName>
    </alternativeName>
    <alternativeName>
        <fullName evidence="1">Sulfur insertion protein LipA</fullName>
    </alternativeName>
</protein>